<feature type="chain" id="PRO_0000173131" description="Large ribosomal subunit protein bL31">
    <location>
        <begin position="1"/>
        <end position="84"/>
    </location>
</feature>
<feature type="binding site" evidence="1">
    <location>
        <position position="16"/>
    </location>
    <ligand>
        <name>Zn(2+)</name>
        <dbReference type="ChEBI" id="CHEBI:29105"/>
    </ligand>
</feature>
<feature type="binding site" evidence="1">
    <location>
        <position position="18"/>
    </location>
    <ligand>
        <name>Zn(2+)</name>
        <dbReference type="ChEBI" id="CHEBI:29105"/>
    </ligand>
</feature>
<feature type="binding site" evidence="1">
    <location>
        <position position="38"/>
    </location>
    <ligand>
        <name>Zn(2+)</name>
        <dbReference type="ChEBI" id="CHEBI:29105"/>
    </ligand>
</feature>
<feature type="binding site" evidence="1">
    <location>
        <position position="41"/>
    </location>
    <ligand>
        <name>Zn(2+)</name>
        <dbReference type="ChEBI" id="CHEBI:29105"/>
    </ligand>
</feature>
<comment type="function">
    <text evidence="1">Binds the 23S rRNA.</text>
</comment>
<comment type="cofactor">
    <cofactor evidence="1">
        <name>Zn(2+)</name>
        <dbReference type="ChEBI" id="CHEBI:29105"/>
    </cofactor>
    <text evidence="1">Binds 1 zinc ion per subunit.</text>
</comment>
<comment type="subunit">
    <text evidence="1">Part of the 50S ribosomal subunit.</text>
</comment>
<comment type="similarity">
    <text evidence="1">Belongs to the bacterial ribosomal protein bL31 family. Type A subfamily.</text>
</comment>
<proteinExistence type="inferred from homology"/>
<keyword id="KW-0479">Metal-binding</keyword>
<keyword id="KW-1185">Reference proteome</keyword>
<keyword id="KW-0687">Ribonucleoprotein</keyword>
<keyword id="KW-0689">Ribosomal protein</keyword>
<keyword id="KW-0694">RNA-binding</keyword>
<keyword id="KW-0699">rRNA-binding</keyword>
<keyword id="KW-0862">Zinc</keyword>
<protein>
    <recommendedName>
        <fullName evidence="1">Large ribosomal subunit protein bL31</fullName>
    </recommendedName>
    <alternativeName>
        <fullName evidence="2">50S ribosomal protein L31</fullName>
    </alternativeName>
</protein>
<dbReference type="EMBL" id="U15186">
    <property type="protein sequence ID" value="AAA63092.1"/>
    <property type="molecule type" value="Genomic_DNA"/>
</dbReference>
<dbReference type="EMBL" id="AL583920">
    <property type="protein sequence ID" value="CAC31514.1"/>
    <property type="molecule type" value="Genomic_DNA"/>
</dbReference>
<dbReference type="PIR" id="T09987">
    <property type="entry name" value="T09987"/>
</dbReference>
<dbReference type="RefSeq" id="NP_301827.1">
    <property type="nucleotide sequence ID" value="NC_002677.1"/>
</dbReference>
<dbReference type="RefSeq" id="WP_010908151.1">
    <property type="nucleotide sequence ID" value="NC_002677.1"/>
</dbReference>
<dbReference type="SMR" id="P45834"/>
<dbReference type="STRING" id="272631.gene:17574960"/>
<dbReference type="KEGG" id="mle:ML1133"/>
<dbReference type="PATRIC" id="fig|272631.5.peg.2055"/>
<dbReference type="Leproma" id="ML1133"/>
<dbReference type="eggNOG" id="COG0254">
    <property type="taxonomic scope" value="Bacteria"/>
</dbReference>
<dbReference type="HOGENOM" id="CLU_114306_1_0_11"/>
<dbReference type="OrthoDB" id="9803251at2"/>
<dbReference type="Proteomes" id="UP000000806">
    <property type="component" value="Chromosome"/>
</dbReference>
<dbReference type="GO" id="GO:1990904">
    <property type="term" value="C:ribonucleoprotein complex"/>
    <property type="evidence" value="ECO:0007669"/>
    <property type="project" value="UniProtKB-KW"/>
</dbReference>
<dbReference type="GO" id="GO:0005840">
    <property type="term" value="C:ribosome"/>
    <property type="evidence" value="ECO:0007669"/>
    <property type="project" value="UniProtKB-KW"/>
</dbReference>
<dbReference type="GO" id="GO:0046872">
    <property type="term" value="F:metal ion binding"/>
    <property type="evidence" value="ECO:0007669"/>
    <property type="project" value="UniProtKB-KW"/>
</dbReference>
<dbReference type="GO" id="GO:0019843">
    <property type="term" value="F:rRNA binding"/>
    <property type="evidence" value="ECO:0007669"/>
    <property type="project" value="UniProtKB-KW"/>
</dbReference>
<dbReference type="GO" id="GO:0003735">
    <property type="term" value="F:structural constituent of ribosome"/>
    <property type="evidence" value="ECO:0007669"/>
    <property type="project" value="InterPro"/>
</dbReference>
<dbReference type="GO" id="GO:0006412">
    <property type="term" value="P:translation"/>
    <property type="evidence" value="ECO:0007669"/>
    <property type="project" value="UniProtKB-UniRule"/>
</dbReference>
<dbReference type="Gene3D" id="4.10.830.30">
    <property type="entry name" value="Ribosomal protein L31"/>
    <property type="match status" value="1"/>
</dbReference>
<dbReference type="HAMAP" id="MF_00501">
    <property type="entry name" value="Ribosomal_bL31_1"/>
    <property type="match status" value="1"/>
</dbReference>
<dbReference type="InterPro" id="IPR034704">
    <property type="entry name" value="Ribosomal_bL28/bL31-like_sf"/>
</dbReference>
<dbReference type="InterPro" id="IPR002150">
    <property type="entry name" value="Ribosomal_bL31"/>
</dbReference>
<dbReference type="InterPro" id="IPR027491">
    <property type="entry name" value="Ribosomal_bL31_A"/>
</dbReference>
<dbReference type="InterPro" id="IPR042105">
    <property type="entry name" value="Ribosomal_bL31_sf"/>
</dbReference>
<dbReference type="NCBIfam" id="TIGR00105">
    <property type="entry name" value="L31"/>
    <property type="match status" value="1"/>
</dbReference>
<dbReference type="NCBIfam" id="NF000612">
    <property type="entry name" value="PRK00019.1"/>
    <property type="match status" value="1"/>
</dbReference>
<dbReference type="NCBIfam" id="NF001809">
    <property type="entry name" value="PRK00528.1"/>
    <property type="match status" value="1"/>
</dbReference>
<dbReference type="PANTHER" id="PTHR33280">
    <property type="entry name" value="50S RIBOSOMAL PROTEIN L31, CHLOROPLASTIC"/>
    <property type="match status" value="1"/>
</dbReference>
<dbReference type="PANTHER" id="PTHR33280:SF1">
    <property type="entry name" value="LARGE RIBOSOMAL SUBUNIT PROTEIN BL31C"/>
    <property type="match status" value="1"/>
</dbReference>
<dbReference type="Pfam" id="PF01197">
    <property type="entry name" value="Ribosomal_L31"/>
    <property type="match status" value="1"/>
</dbReference>
<dbReference type="PRINTS" id="PR01249">
    <property type="entry name" value="RIBOSOMALL31"/>
</dbReference>
<dbReference type="SUPFAM" id="SSF143800">
    <property type="entry name" value="L28p-like"/>
    <property type="match status" value="1"/>
</dbReference>
<dbReference type="PROSITE" id="PS01143">
    <property type="entry name" value="RIBOSOMAL_L31"/>
    <property type="match status" value="1"/>
</dbReference>
<name>RL31_MYCLE</name>
<sequence length="84" mass="9278">MKANIHPAYAETTVVCGCGNTFQTRSTKPGGRIVVEVCSQCHPFYTGKQKILDSGGRVARFEKRYGKRKVGVDQVAAYPEQNNK</sequence>
<gene>
    <name evidence="1" type="primary">rpmE</name>
    <name type="ordered locus">ML1133</name>
</gene>
<organism>
    <name type="scientific">Mycobacterium leprae (strain TN)</name>
    <dbReference type="NCBI Taxonomy" id="272631"/>
    <lineage>
        <taxon>Bacteria</taxon>
        <taxon>Bacillati</taxon>
        <taxon>Actinomycetota</taxon>
        <taxon>Actinomycetes</taxon>
        <taxon>Mycobacteriales</taxon>
        <taxon>Mycobacteriaceae</taxon>
        <taxon>Mycobacterium</taxon>
    </lineage>
</organism>
<reference key="1">
    <citation type="submission" date="1994-09" db="EMBL/GenBank/DDBJ databases">
        <authorList>
            <person name="Smith D.R."/>
            <person name="Robison K."/>
        </authorList>
    </citation>
    <scope>NUCLEOTIDE SEQUENCE [GENOMIC DNA]</scope>
</reference>
<reference key="2">
    <citation type="journal article" date="2001" name="Nature">
        <title>Massive gene decay in the leprosy bacillus.</title>
        <authorList>
            <person name="Cole S.T."/>
            <person name="Eiglmeier K."/>
            <person name="Parkhill J."/>
            <person name="James K.D."/>
            <person name="Thomson N.R."/>
            <person name="Wheeler P.R."/>
            <person name="Honore N."/>
            <person name="Garnier T."/>
            <person name="Churcher C.M."/>
            <person name="Harris D.E."/>
            <person name="Mungall K.L."/>
            <person name="Basham D."/>
            <person name="Brown D."/>
            <person name="Chillingworth T."/>
            <person name="Connor R."/>
            <person name="Davies R.M."/>
            <person name="Devlin K."/>
            <person name="Duthoy S."/>
            <person name="Feltwell T."/>
            <person name="Fraser A."/>
            <person name="Hamlin N."/>
            <person name="Holroyd S."/>
            <person name="Hornsby T."/>
            <person name="Jagels K."/>
            <person name="Lacroix C."/>
            <person name="Maclean J."/>
            <person name="Moule S."/>
            <person name="Murphy L.D."/>
            <person name="Oliver K."/>
            <person name="Quail M.A."/>
            <person name="Rajandream M.A."/>
            <person name="Rutherford K.M."/>
            <person name="Rutter S."/>
            <person name="Seeger K."/>
            <person name="Simon S."/>
            <person name="Simmonds M."/>
            <person name="Skelton J."/>
            <person name="Squares R."/>
            <person name="Squares S."/>
            <person name="Stevens K."/>
            <person name="Taylor K."/>
            <person name="Whitehead S."/>
            <person name="Woodward J.R."/>
            <person name="Barrell B.G."/>
        </authorList>
    </citation>
    <scope>NUCLEOTIDE SEQUENCE [LARGE SCALE GENOMIC DNA]</scope>
    <source>
        <strain>TN</strain>
    </source>
</reference>
<accession>P45834</accession>
<evidence type="ECO:0000255" key="1">
    <source>
        <dbReference type="HAMAP-Rule" id="MF_00501"/>
    </source>
</evidence>
<evidence type="ECO:0000305" key="2"/>